<comment type="function">
    <text evidence="1">Catalyzes the oxidation of 5,10-methylenetetrahydrofolate to 5,10-methenyltetrahydrofolate and then the hydrolysis of 5,10-methenyltetrahydrofolate to 10-formyltetrahydrofolate.</text>
</comment>
<comment type="catalytic activity">
    <reaction evidence="1">
        <text>(6R)-5,10-methylene-5,6,7,8-tetrahydrofolate + NADP(+) = (6R)-5,10-methenyltetrahydrofolate + NADPH</text>
        <dbReference type="Rhea" id="RHEA:22812"/>
        <dbReference type="ChEBI" id="CHEBI:15636"/>
        <dbReference type="ChEBI" id="CHEBI:57455"/>
        <dbReference type="ChEBI" id="CHEBI:57783"/>
        <dbReference type="ChEBI" id="CHEBI:58349"/>
        <dbReference type="EC" id="1.5.1.5"/>
    </reaction>
</comment>
<comment type="catalytic activity">
    <reaction evidence="1">
        <text>(6R)-5,10-methenyltetrahydrofolate + H2O = (6R)-10-formyltetrahydrofolate + H(+)</text>
        <dbReference type="Rhea" id="RHEA:23700"/>
        <dbReference type="ChEBI" id="CHEBI:15377"/>
        <dbReference type="ChEBI" id="CHEBI:15378"/>
        <dbReference type="ChEBI" id="CHEBI:57455"/>
        <dbReference type="ChEBI" id="CHEBI:195366"/>
        <dbReference type="EC" id="3.5.4.9"/>
    </reaction>
</comment>
<comment type="pathway">
    <text evidence="1">One-carbon metabolism; tetrahydrofolate interconversion.</text>
</comment>
<comment type="subunit">
    <text evidence="1">Homodimer.</text>
</comment>
<comment type="similarity">
    <text evidence="1">Belongs to the tetrahydrofolate dehydrogenase/cyclohydrolase family.</text>
</comment>
<organism>
    <name type="scientific">Yersinia pestis bv. Antiqua (strain Angola)</name>
    <dbReference type="NCBI Taxonomy" id="349746"/>
    <lineage>
        <taxon>Bacteria</taxon>
        <taxon>Pseudomonadati</taxon>
        <taxon>Pseudomonadota</taxon>
        <taxon>Gammaproteobacteria</taxon>
        <taxon>Enterobacterales</taxon>
        <taxon>Yersiniaceae</taxon>
        <taxon>Yersinia</taxon>
    </lineage>
</organism>
<proteinExistence type="inferred from homology"/>
<accession>A9R256</accession>
<reference key="1">
    <citation type="journal article" date="2010" name="J. Bacteriol.">
        <title>Genome sequence of the deep-rooted Yersinia pestis strain Angola reveals new insights into the evolution and pangenome of the plague bacterium.</title>
        <authorList>
            <person name="Eppinger M."/>
            <person name="Worsham P.L."/>
            <person name="Nikolich M.P."/>
            <person name="Riley D.R."/>
            <person name="Sebastian Y."/>
            <person name="Mou S."/>
            <person name="Achtman M."/>
            <person name="Lindler L.E."/>
            <person name="Ravel J."/>
        </authorList>
    </citation>
    <scope>NUCLEOTIDE SEQUENCE [LARGE SCALE GENOMIC DNA]</scope>
    <source>
        <strain>Angola</strain>
    </source>
</reference>
<name>FOLD_YERPG</name>
<feature type="chain" id="PRO_1000147540" description="Bifunctional protein FolD">
    <location>
        <begin position="1"/>
        <end position="288"/>
    </location>
</feature>
<feature type="binding site" evidence="1">
    <location>
        <begin position="166"/>
        <end position="168"/>
    </location>
    <ligand>
        <name>NADP(+)</name>
        <dbReference type="ChEBI" id="CHEBI:58349"/>
    </ligand>
</feature>
<feature type="binding site" evidence="1">
    <location>
        <position position="232"/>
    </location>
    <ligand>
        <name>NADP(+)</name>
        <dbReference type="ChEBI" id="CHEBI:58349"/>
    </ligand>
</feature>
<dbReference type="EC" id="1.5.1.5" evidence="1"/>
<dbReference type="EC" id="3.5.4.9" evidence="1"/>
<dbReference type="EMBL" id="CP000901">
    <property type="protein sequence ID" value="ABX86505.1"/>
    <property type="molecule type" value="Genomic_DNA"/>
</dbReference>
<dbReference type="RefSeq" id="WP_002209774.1">
    <property type="nucleotide sequence ID" value="NZ_CP009935.1"/>
</dbReference>
<dbReference type="SMR" id="A9R256"/>
<dbReference type="GeneID" id="57975784"/>
<dbReference type="KEGG" id="ypg:YpAngola_A1281"/>
<dbReference type="PATRIC" id="fig|349746.12.peg.2242"/>
<dbReference type="UniPathway" id="UPA00193"/>
<dbReference type="GO" id="GO:0005829">
    <property type="term" value="C:cytosol"/>
    <property type="evidence" value="ECO:0007669"/>
    <property type="project" value="TreeGrafter"/>
</dbReference>
<dbReference type="GO" id="GO:0004477">
    <property type="term" value="F:methenyltetrahydrofolate cyclohydrolase activity"/>
    <property type="evidence" value="ECO:0007669"/>
    <property type="project" value="UniProtKB-UniRule"/>
</dbReference>
<dbReference type="GO" id="GO:0004488">
    <property type="term" value="F:methylenetetrahydrofolate dehydrogenase (NADP+) activity"/>
    <property type="evidence" value="ECO:0007669"/>
    <property type="project" value="UniProtKB-UniRule"/>
</dbReference>
<dbReference type="GO" id="GO:0000105">
    <property type="term" value="P:L-histidine biosynthetic process"/>
    <property type="evidence" value="ECO:0007669"/>
    <property type="project" value="UniProtKB-KW"/>
</dbReference>
<dbReference type="GO" id="GO:0009086">
    <property type="term" value="P:methionine biosynthetic process"/>
    <property type="evidence" value="ECO:0007669"/>
    <property type="project" value="UniProtKB-KW"/>
</dbReference>
<dbReference type="GO" id="GO:0006164">
    <property type="term" value="P:purine nucleotide biosynthetic process"/>
    <property type="evidence" value="ECO:0007669"/>
    <property type="project" value="UniProtKB-KW"/>
</dbReference>
<dbReference type="GO" id="GO:0035999">
    <property type="term" value="P:tetrahydrofolate interconversion"/>
    <property type="evidence" value="ECO:0007669"/>
    <property type="project" value="UniProtKB-UniRule"/>
</dbReference>
<dbReference type="CDD" id="cd01080">
    <property type="entry name" value="NAD_bind_m-THF_DH_Cyclohyd"/>
    <property type="match status" value="1"/>
</dbReference>
<dbReference type="FunFam" id="3.40.50.10860:FF:000001">
    <property type="entry name" value="Bifunctional protein FolD"/>
    <property type="match status" value="1"/>
</dbReference>
<dbReference type="FunFam" id="3.40.50.720:FF:000006">
    <property type="entry name" value="Bifunctional protein FolD"/>
    <property type="match status" value="1"/>
</dbReference>
<dbReference type="Gene3D" id="3.40.50.10860">
    <property type="entry name" value="Leucine Dehydrogenase, chain A, domain 1"/>
    <property type="match status" value="1"/>
</dbReference>
<dbReference type="Gene3D" id="3.40.50.720">
    <property type="entry name" value="NAD(P)-binding Rossmann-like Domain"/>
    <property type="match status" value="1"/>
</dbReference>
<dbReference type="HAMAP" id="MF_01576">
    <property type="entry name" value="THF_DHG_CYH"/>
    <property type="match status" value="1"/>
</dbReference>
<dbReference type="InterPro" id="IPR046346">
    <property type="entry name" value="Aminoacid_DH-like_N_sf"/>
</dbReference>
<dbReference type="InterPro" id="IPR036291">
    <property type="entry name" value="NAD(P)-bd_dom_sf"/>
</dbReference>
<dbReference type="InterPro" id="IPR000672">
    <property type="entry name" value="THF_DH/CycHdrlase"/>
</dbReference>
<dbReference type="InterPro" id="IPR020630">
    <property type="entry name" value="THF_DH/CycHdrlase_cat_dom"/>
</dbReference>
<dbReference type="InterPro" id="IPR020867">
    <property type="entry name" value="THF_DH/CycHdrlase_CS"/>
</dbReference>
<dbReference type="InterPro" id="IPR020631">
    <property type="entry name" value="THF_DH/CycHdrlase_NAD-bd_dom"/>
</dbReference>
<dbReference type="NCBIfam" id="NF008058">
    <property type="entry name" value="PRK10792.1"/>
    <property type="match status" value="1"/>
</dbReference>
<dbReference type="NCBIfam" id="NF010783">
    <property type="entry name" value="PRK14186.1"/>
    <property type="match status" value="1"/>
</dbReference>
<dbReference type="PANTHER" id="PTHR48099:SF5">
    <property type="entry name" value="C-1-TETRAHYDROFOLATE SYNTHASE, CYTOPLASMIC"/>
    <property type="match status" value="1"/>
</dbReference>
<dbReference type="PANTHER" id="PTHR48099">
    <property type="entry name" value="C-1-TETRAHYDROFOLATE SYNTHASE, CYTOPLASMIC-RELATED"/>
    <property type="match status" value="1"/>
</dbReference>
<dbReference type="Pfam" id="PF00763">
    <property type="entry name" value="THF_DHG_CYH"/>
    <property type="match status" value="1"/>
</dbReference>
<dbReference type="Pfam" id="PF02882">
    <property type="entry name" value="THF_DHG_CYH_C"/>
    <property type="match status" value="1"/>
</dbReference>
<dbReference type="PRINTS" id="PR00085">
    <property type="entry name" value="THFDHDRGNASE"/>
</dbReference>
<dbReference type="SUPFAM" id="SSF53223">
    <property type="entry name" value="Aminoacid dehydrogenase-like, N-terminal domain"/>
    <property type="match status" value="1"/>
</dbReference>
<dbReference type="SUPFAM" id="SSF51735">
    <property type="entry name" value="NAD(P)-binding Rossmann-fold domains"/>
    <property type="match status" value="1"/>
</dbReference>
<dbReference type="PROSITE" id="PS00766">
    <property type="entry name" value="THF_DHG_CYH_1"/>
    <property type="match status" value="1"/>
</dbReference>
<dbReference type="PROSITE" id="PS00767">
    <property type="entry name" value="THF_DHG_CYH_2"/>
    <property type="match status" value="1"/>
</dbReference>
<sequence>MSAKIIDGKTIAQQVRNEVAAVVQQRLAAGKRAPGLAVVLVGENPASQIYVASKRKACEEVGFVSRSYDLPMATSEAELLALIDSLNEDTEIDGILIQLPLPNGIDNVKVLERIHPDKDVDGFHPYNVGRLCQRAPKLRACTPRGIMTLLERYDIPTYGLNAVVVGASNIVGRPMSLELLLAGCTTTVTHRFTKNLRHHIENADLLVVAVGKPGFIPGEWIKPGAIVIDVGINRLESGKVVGDVAFDVAAERAGWITPVPGGVGPMTVATLIQNTLQACEEYHDISQN</sequence>
<keyword id="KW-0028">Amino-acid biosynthesis</keyword>
<keyword id="KW-0368">Histidine biosynthesis</keyword>
<keyword id="KW-0378">Hydrolase</keyword>
<keyword id="KW-0486">Methionine biosynthesis</keyword>
<keyword id="KW-0511">Multifunctional enzyme</keyword>
<keyword id="KW-0521">NADP</keyword>
<keyword id="KW-0554">One-carbon metabolism</keyword>
<keyword id="KW-0560">Oxidoreductase</keyword>
<keyword id="KW-0658">Purine biosynthesis</keyword>
<gene>
    <name evidence="1" type="primary">folD</name>
    <name type="ordered locus">YpAngola_A1281</name>
</gene>
<evidence type="ECO:0000255" key="1">
    <source>
        <dbReference type="HAMAP-Rule" id="MF_01576"/>
    </source>
</evidence>
<protein>
    <recommendedName>
        <fullName evidence="1">Bifunctional protein FolD</fullName>
    </recommendedName>
    <domain>
        <recommendedName>
            <fullName evidence="1">Methylenetetrahydrofolate dehydrogenase</fullName>
            <ecNumber evidence="1">1.5.1.5</ecNumber>
        </recommendedName>
    </domain>
    <domain>
        <recommendedName>
            <fullName evidence="1">Methenyltetrahydrofolate cyclohydrolase</fullName>
            <ecNumber evidence="1">3.5.4.9</ecNumber>
        </recommendedName>
    </domain>
</protein>